<gene>
    <name type="primary">OR2A14</name>
    <name type="synonym">OR2A14P</name>
    <name type="synonym">OR2A6</name>
</gene>
<evidence type="ECO:0000255" key="1"/>
<evidence type="ECO:0000255" key="2">
    <source>
        <dbReference type="PROSITE-ProRule" id="PRU00521"/>
    </source>
</evidence>
<evidence type="ECO:0000269" key="3">
    <source>
    </source>
</evidence>
<evidence type="ECO:0000269" key="4">
    <source>
    </source>
</evidence>
<evidence type="ECO:0000269" key="5">
    <source>
    </source>
</evidence>
<evidence type="ECO:0000269" key="6">
    <source>
    </source>
</evidence>
<evidence type="ECO:0000269" key="7">
    <source>
    </source>
</evidence>
<evidence type="ECO:0000305" key="8"/>
<dbReference type="EMBL" id="AB065693">
    <property type="protein sequence ID" value="BAC05916.1"/>
    <property type="molecule type" value="Genomic_DNA"/>
</dbReference>
<dbReference type="EMBL" id="AF399596">
    <property type="protein sequence ID" value="AAK95081.1"/>
    <property type="molecule type" value="Genomic_DNA"/>
</dbReference>
<dbReference type="EMBL" id="KP290564">
    <property type="protein sequence ID" value="ALI87723.1"/>
    <property type="molecule type" value="Genomic_DNA"/>
</dbReference>
<dbReference type="EMBL" id="AC091768">
    <property type="status" value="NOT_ANNOTATED_CDS"/>
    <property type="molecule type" value="Genomic_DNA"/>
</dbReference>
<dbReference type="EMBL" id="CH236959">
    <property type="protein sequence ID" value="EAL23799.1"/>
    <property type="molecule type" value="Genomic_DNA"/>
</dbReference>
<dbReference type="EMBL" id="CH878732">
    <property type="protein sequence ID" value="EAW55633.1"/>
    <property type="molecule type" value="Genomic_DNA"/>
</dbReference>
<dbReference type="EMBL" id="BC136889">
    <property type="protein sequence ID" value="AAI36890.1"/>
    <property type="molecule type" value="mRNA"/>
</dbReference>
<dbReference type="EMBL" id="BK004421">
    <property type="protein sequence ID" value="DAA04819.1"/>
    <property type="molecule type" value="Genomic_DNA"/>
</dbReference>
<dbReference type="CCDS" id="CCDS43672.1"/>
<dbReference type="RefSeq" id="NP_001001659.1">
    <property type="nucleotide sequence ID" value="NM_001001659.3"/>
</dbReference>
<dbReference type="SMR" id="Q96R47"/>
<dbReference type="FunCoup" id="Q96R47">
    <property type="interactions" value="450"/>
</dbReference>
<dbReference type="STRING" id="9606.ENSP00000493353"/>
<dbReference type="GlyCosmos" id="Q96R47">
    <property type="glycosylation" value="1 site, No reported glycans"/>
</dbReference>
<dbReference type="GlyGen" id="Q96R47">
    <property type="glycosylation" value="1 site"/>
</dbReference>
<dbReference type="iPTMnet" id="Q96R47"/>
<dbReference type="PhosphoSitePlus" id="Q96R47"/>
<dbReference type="BioMuta" id="OR2A14"/>
<dbReference type="DMDM" id="296439489"/>
<dbReference type="MassIVE" id="Q96R47"/>
<dbReference type="PaxDb" id="9606-ENSP00000386137"/>
<dbReference type="PeptideAtlas" id="Q96R47"/>
<dbReference type="Antibodypedia" id="64089">
    <property type="antibodies" value="15 antibodies from 7 providers"/>
</dbReference>
<dbReference type="DNASU" id="135941"/>
<dbReference type="Ensembl" id="ENST00000408899.2">
    <property type="protein sequence ID" value="ENSP00000386137.2"/>
    <property type="gene ID" value="ENSG00000221938.5"/>
</dbReference>
<dbReference type="Ensembl" id="ENST00000641068.1">
    <property type="protein sequence ID" value="ENSP00000493353.1"/>
    <property type="gene ID" value="ENSG00000221938.5"/>
</dbReference>
<dbReference type="GeneID" id="135941"/>
<dbReference type="KEGG" id="hsa:135941"/>
<dbReference type="MANE-Select" id="ENST00000641068.1">
    <property type="protein sequence ID" value="ENSP00000493353.1"/>
    <property type="RefSeq nucleotide sequence ID" value="NM_001001659.3"/>
    <property type="RefSeq protein sequence ID" value="NP_001001659.1"/>
</dbReference>
<dbReference type="UCSC" id="uc011kua.3">
    <property type="organism name" value="human"/>
</dbReference>
<dbReference type="AGR" id="HGNC:15084"/>
<dbReference type="CTD" id="135941"/>
<dbReference type="DisGeNET" id="135941"/>
<dbReference type="GeneCards" id="OR2A14"/>
<dbReference type="HGNC" id="HGNC:15084">
    <property type="gene designation" value="OR2A14"/>
</dbReference>
<dbReference type="HPA" id="ENSG00000221938">
    <property type="expression patterns" value="Not detected"/>
</dbReference>
<dbReference type="neXtProt" id="NX_Q96R47"/>
<dbReference type="PharmGKB" id="PA32106"/>
<dbReference type="VEuPathDB" id="HostDB:ENSG00000221938"/>
<dbReference type="eggNOG" id="ENOG502SIA2">
    <property type="taxonomic scope" value="Eukaryota"/>
</dbReference>
<dbReference type="GeneTree" id="ENSGT00940000153255"/>
<dbReference type="InParanoid" id="Q96R47"/>
<dbReference type="OMA" id="GLFCLFY"/>
<dbReference type="OrthoDB" id="6147321at2759"/>
<dbReference type="PAN-GO" id="Q96R47">
    <property type="GO annotations" value="0 GO annotations based on evolutionary models"/>
</dbReference>
<dbReference type="PhylomeDB" id="Q96R47"/>
<dbReference type="TreeFam" id="TF337251"/>
<dbReference type="PathwayCommons" id="Q96R47"/>
<dbReference type="Reactome" id="R-HSA-9752946">
    <property type="pathway name" value="Expression and translocation of olfactory receptors"/>
</dbReference>
<dbReference type="BioGRID-ORCS" id="135941">
    <property type="hits" value="6 hits in 735 CRISPR screens"/>
</dbReference>
<dbReference type="GeneWiki" id="OR2A14"/>
<dbReference type="GenomeRNAi" id="135941"/>
<dbReference type="Pharos" id="Q96R47">
    <property type="development level" value="Tdark"/>
</dbReference>
<dbReference type="PRO" id="PR:Q96R47"/>
<dbReference type="Proteomes" id="UP000005640">
    <property type="component" value="Chromosome 7"/>
</dbReference>
<dbReference type="RNAct" id="Q96R47">
    <property type="molecule type" value="protein"/>
</dbReference>
<dbReference type="Bgee" id="ENSG00000221938">
    <property type="expression patterns" value="Expressed in primordial germ cell in gonad and 2 other cell types or tissues"/>
</dbReference>
<dbReference type="ExpressionAtlas" id="Q96R47">
    <property type="expression patterns" value="baseline and differential"/>
</dbReference>
<dbReference type="GO" id="GO:0005886">
    <property type="term" value="C:plasma membrane"/>
    <property type="evidence" value="ECO:0000318"/>
    <property type="project" value="GO_Central"/>
</dbReference>
<dbReference type="GO" id="GO:0004930">
    <property type="term" value="F:G protein-coupled receptor activity"/>
    <property type="evidence" value="ECO:0007669"/>
    <property type="project" value="UniProtKB-KW"/>
</dbReference>
<dbReference type="GO" id="GO:0004984">
    <property type="term" value="F:olfactory receptor activity"/>
    <property type="evidence" value="ECO:0000318"/>
    <property type="project" value="GO_Central"/>
</dbReference>
<dbReference type="GO" id="GO:0050911">
    <property type="term" value="P:detection of chemical stimulus involved in sensory perception of smell"/>
    <property type="evidence" value="ECO:0000318"/>
    <property type="project" value="GO_Central"/>
</dbReference>
<dbReference type="CDD" id="cd15420">
    <property type="entry name" value="7tmA_OR2A-like"/>
    <property type="match status" value="1"/>
</dbReference>
<dbReference type="FunFam" id="1.10.1220.70:FF:000001">
    <property type="entry name" value="Olfactory receptor"/>
    <property type="match status" value="1"/>
</dbReference>
<dbReference type="FunFam" id="1.20.1070.10:FF:000008">
    <property type="entry name" value="Olfactory receptor"/>
    <property type="match status" value="1"/>
</dbReference>
<dbReference type="Gene3D" id="1.20.1070.10">
    <property type="entry name" value="Rhodopsin 7-helix transmembrane proteins"/>
    <property type="match status" value="1"/>
</dbReference>
<dbReference type="InterPro" id="IPR000276">
    <property type="entry name" value="GPCR_Rhodpsn"/>
</dbReference>
<dbReference type="InterPro" id="IPR017452">
    <property type="entry name" value="GPCR_Rhodpsn_7TM"/>
</dbReference>
<dbReference type="InterPro" id="IPR000725">
    <property type="entry name" value="Olfact_rcpt"/>
</dbReference>
<dbReference type="PANTHER" id="PTHR26453">
    <property type="entry name" value="OLFACTORY RECEPTOR"/>
    <property type="match status" value="1"/>
</dbReference>
<dbReference type="Pfam" id="PF13853">
    <property type="entry name" value="7tm_4"/>
    <property type="match status" value="1"/>
</dbReference>
<dbReference type="PRINTS" id="PR00237">
    <property type="entry name" value="GPCRRHODOPSN"/>
</dbReference>
<dbReference type="PRINTS" id="PR00245">
    <property type="entry name" value="OLFACTORYR"/>
</dbReference>
<dbReference type="SUPFAM" id="SSF81321">
    <property type="entry name" value="Family A G protein-coupled receptor-like"/>
    <property type="match status" value="1"/>
</dbReference>
<dbReference type="PROSITE" id="PS00237">
    <property type="entry name" value="G_PROTEIN_RECEP_F1_1"/>
    <property type="match status" value="1"/>
</dbReference>
<dbReference type="PROSITE" id="PS50262">
    <property type="entry name" value="G_PROTEIN_RECEP_F1_2"/>
    <property type="match status" value="1"/>
</dbReference>
<organism>
    <name type="scientific">Homo sapiens</name>
    <name type="common">Human</name>
    <dbReference type="NCBI Taxonomy" id="9606"/>
    <lineage>
        <taxon>Eukaryota</taxon>
        <taxon>Metazoa</taxon>
        <taxon>Chordata</taxon>
        <taxon>Craniata</taxon>
        <taxon>Vertebrata</taxon>
        <taxon>Euteleostomi</taxon>
        <taxon>Mammalia</taxon>
        <taxon>Eutheria</taxon>
        <taxon>Euarchontoglires</taxon>
        <taxon>Primates</taxon>
        <taxon>Haplorrhini</taxon>
        <taxon>Catarrhini</taxon>
        <taxon>Hominidae</taxon>
        <taxon>Homo</taxon>
    </lineage>
</organism>
<comment type="function">
    <text evidence="8">Odorant receptor.</text>
</comment>
<comment type="subcellular location">
    <subcellularLocation>
        <location>Cell membrane</location>
        <topology>Multi-pass membrane protein</topology>
    </subcellularLocation>
</comment>
<comment type="similarity">
    <text evidence="2">Belongs to the G-protein coupled receptor 1 family.</text>
</comment>
<comment type="online information" name="Human Olfactory Receptor Data Exploratorium (HORDE)">
    <link uri="http://genome.weizmann.ac.il/horde/card/index/symbol:OR2A14"/>
</comment>
<feature type="chain" id="PRO_0000150458" description="Olfactory receptor 2A14">
    <location>
        <begin position="1"/>
        <end position="310"/>
    </location>
</feature>
<feature type="topological domain" description="Extracellular" evidence="1">
    <location>
        <begin position="1"/>
        <end position="24"/>
    </location>
</feature>
<feature type="transmembrane region" description="Helical; Name=1" evidence="1">
    <location>
        <begin position="25"/>
        <end position="48"/>
    </location>
</feature>
<feature type="topological domain" description="Cytoplasmic" evidence="1">
    <location>
        <begin position="49"/>
        <end position="56"/>
    </location>
</feature>
<feature type="transmembrane region" description="Helical; Name=2" evidence="1">
    <location>
        <begin position="57"/>
        <end position="78"/>
    </location>
</feature>
<feature type="topological domain" description="Extracellular" evidence="1">
    <location>
        <begin position="79"/>
        <end position="99"/>
    </location>
</feature>
<feature type="transmembrane region" description="Helical; Name=3" evidence="1">
    <location>
        <begin position="100"/>
        <end position="119"/>
    </location>
</feature>
<feature type="topological domain" description="Cytoplasmic" evidence="1">
    <location>
        <begin position="120"/>
        <end position="138"/>
    </location>
</feature>
<feature type="transmembrane region" description="Helical; Name=4" evidence="1">
    <location>
        <begin position="139"/>
        <end position="157"/>
    </location>
</feature>
<feature type="topological domain" description="Extracellular" evidence="1">
    <location>
        <begin position="158"/>
        <end position="194"/>
    </location>
</feature>
<feature type="transmembrane region" description="Helical; Name=5" evidence="1">
    <location>
        <begin position="195"/>
        <end position="218"/>
    </location>
</feature>
<feature type="topological domain" description="Cytoplasmic" evidence="1">
    <location>
        <begin position="219"/>
        <end position="235"/>
    </location>
</feature>
<feature type="transmembrane region" description="Helical; Name=6" evidence="1">
    <location>
        <begin position="236"/>
        <end position="258"/>
    </location>
</feature>
<feature type="topological domain" description="Extracellular" evidence="1">
    <location>
        <begin position="259"/>
        <end position="271"/>
    </location>
</feature>
<feature type="transmembrane region" description="Helical; Name=7" evidence="1">
    <location>
        <begin position="272"/>
        <end position="291"/>
    </location>
</feature>
<feature type="topological domain" description="Cytoplasmic" evidence="1">
    <location>
        <begin position="292"/>
        <end position="310"/>
    </location>
</feature>
<feature type="glycosylation site" description="N-linked (GlcNAc...) asparagine" evidence="1">
    <location>
        <position position="4"/>
    </location>
</feature>
<feature type="disulfide bond" evidence="2">
    <location>
        <begin position="96"/>
        <end position="188"/>
    </location>
</feature>
<feature type="sequence variant" id="VAR_060477" description="In dbSNP:rs2961160." evidence="3 4 5 6 7">
    <original>S</original>
    <variation>I</variation>
    <location>
        <position position="133"/>
    </location>
</feature>
<feature type="sequence variant" id="VAR_060478" description="In dbSNP:rs2961161." evidence="3 5">
    <original>S</original>
    <variation>R</variation>
    <location>
        <position position="164"/>
    </location>
</feature>
<feature type="sequence conflict" description="In Ref. 2; ALI87723, 3; AAK95081, 5; EAL23799 and 6; AAI36890." evidence="8" ref="2 3 5 6">
    <location>
        <position position="177"/>
    </location>
</feature>
<proteinExistence type="evidence at transcript level"/>
<keyword id="KW-1003">Cell membrane</keyword>
<keyword id="KW-1015">Disulfide bond</keyword>
<keyword id="KW-0297">G-protein coupled receptor</keyword>
<keyword id="KW-0325">Glycoprotein</keyword>
<keyword id="KW-0472">Membrane</keyword>
<keyword id="KW-0552">Olfaction</keyword>
<keyword id="KW-0675">Receptor</keyword>
<keyword id="KW-1185">Reference proteome</keyword>
<keyword id="KW-0716">Sensory transduction</keyword>
<keyword id="KW-0807">Transducer</keyword>
<keyword id="KW-0812">Transmembrane</keyword>
<keyword id="KW-1133">Transmembrane helix</keyword>
<reference key="1">
    <citation type="submission" date="2001-07" db="EMBL/GenBank/DDBJ databases">
        <title>Genome-wide discovery and analysis of human seven transmembrane helix receptor genes.</title>
        <authorList>
            <person name="Suwa M."/>
            <person name="Sato T."/>
            <person name="Okouchi I."/>
            <person name="Arita M."/>
            <person name="Futami K."/>
            <person name="Matsumoto S."/>
            <person name="Tsutsumi S."/>
            <person name="Aburatani H."/>
            <person name="Asai K."/>
            <person name="Akiyama Y."/>
        </authorList>
    </citation>
    <scope>NUCLEOTIDE SEQUENCE [GENOMIC DNA]</scope>
</reference>
<reference key="2">
    <citation type="journal article" date="2015" name="Sci. Data">
        <title>Human olfactory receptor responses to odorants.</title>
        <authorList>
            <person name="Mainland J.D."/>
            <person name="Li Y.R."/>
            <person name="Zhou T."/>
            <person name="Liu W.L."/>
            <person name="Matsunami H."/>
        </authorList>
    </citation>
    <scope>NUCLEOTIDE SEQUENCE [GENOMIC DNA]</scope>
    <scope>VARIANT ILE-133</scope>
</reference>
<reference key="3">
    <citation type="journal article" date="2002" name="Genomics">
        <title>DEFOG: a practical scheme for deciphering families of genes.</title>
        <authorList>
            <person name="Fuchs T."/>
            <person name="Malecova B."/>
            <person name="Linhart C."/>
            <person name="Sharan R."/>
            <person name="Khen M."/>
            <person name="Herwig R."/>
            <person name="Shmulevich D."/>
            <person name="Elkon R."/>
            <person name="Steinfath M."/>
            <person name="O'Brien J.K."/>
            <person name="Radelof U."/>
            <person name="Lehrach H."/>
            <person name="Lancet D."/>
            <person name="Shamir R."/>
        </authorList>
    </citation>
    <scope>NUCLEOTIDE SEQUENCE [GENOMIC DNA] OF 67-282</scope>
    <scope>VARIANTS ILE-133 AND ARG-164</scope>
</reference>
<reference key="4">
    <citation type="submission" date="2005-09" db="EMBL/GenBank/DDBJ databases">
        <authorList>
            <person name="Mural R.J."/>
            <person name="Istrail S."/>
            <person name="Sutton G.G."/>
            <person name="Florea L."/>
            <person name="Halpern A.L."/>
            <person name="Mobarry C.M."/>
            <person name="Lippert R."/>
            <person name="Walenz B."/>
            <person name="Shatkay H."/>
            <person name="Dew I."/>
            <person name="Miller J.R."/>
            <person name="Flanigan M.J."/>
            <person name="Edwards N.J."/>
            <person name="Bolanos R."/>
            <person name="Fasulo D."/>
            <person name="Halldorsson B.V."/>
            <person name="Hannenhalli S."/>
            <person name="Turner R."/>
            <person name="Yooseph S."/>
            <person name="Lu F."/>
            <person name="Nusskern D.R."/>
            <person name="Shue B.C."/>
            <person name="Zheng X.H."/>
            <person name="Zhong F."/>
            <person name="Delcher A.L."/>
            <person name="Huson D.H."/>
            <person name="Kravitz S.A."/>
            <person name="Mouchard L."/>
            <person name="Reinert K."/>
            <person name="Remington K.A."/>
            <person name="Clark A.G."/>
            <person name="Waterman M.S."/>
            <person name="Eichler E.E."/>
            <person name="Adams M.D."/>
            <person name="Hunkapiller M.W."/>
            <person name="Myers E.W."/>
            <person name="Venter J.C."/>
        </authorList>
    </citation>
    <scope>NUCLEOTIDE SEQUENCE [LARGE SCALE GENOMIC DNA]</scope>
    <scope>VARIANT ILE-133</scope>
</reference>
<reference key="5">
    <citation type="journal article" date="2003" name="Science">
        <title>Human chromosome 7: DNA sequence and biology.</title>
        <authorList>
            <person name="Scherer S.W."/>
            <person name="Cheung J."/>
            <person name="MacDonald J.R."/>
            <person name="Osborne L.R."/>
            <person name="Nakabayashi K."/>
            <person name="Herbrick J.-A."/>
            <person name="Carson A.R."/>
            <person name="Parker-Katiraee L."/>
            <person name="Skaug J."/>
            <person name="Khaja R."/>
            <person name="Zhang J."/>
            <person name="Hudek A.K."/>
            <person name="Li M."/>
            <person name="Haddad M."/>
            <person name="Duggan G.E."/>
            <person name="Fernandez B.A."/>
            <person name="Kanematsu E."/>
            <person name="Gentles S."/>
            <person name="Christopoulos C.C."/>
            <person name="Choufani S."/>
            <person name="Kwasnicka D."/>
            <person name="Zheng X.H."/>
            <person name="Lai Z."/>
            <person name="Nusskern D.R."/>
            <person name="Zhang Q."/>
            <person name="Gu Z."/>
            <person name="Lu F."/>
            <person name="Zeesman S."/>
            <person name="Nowaczyk M.J."/>
            <person name="Teshima I."/>
            <person name="Chitayat D."/>
            <person name="Shuman C."/>
            <person name="Weksberg R."/>
            <person name="Zackai E.H."/>
            <person name="Grebe T.A."/>
            <person name="Cox S.R."/>
            <person name="Kirkpatrick S.J."/>
            <person name="Rahman N."/>
            <person name="Friedman J.M."/>
            <person name="Heng H.H.Q."/>
            <person name="Pelicci P.G."/>
            <person name="Lo-Coco F."/>
            <person name="Belloni E."/>
            <person name="Shaffer L.G."/>
            <person name="Pober B."/>
            <person name="Morton C.C."/>
            <person name="Gusella J.F."/>
            <person name="Bruns G.A.P."/>
            <person name="Korf B.R."/>
            <person name="Quade B.J."/>
            <person name="Ligon A.H."/>
            <person name="Ferguson H."/>
            <person name="Higgins A.W."/>
            <person name="Leach N.T."/>
            <person name="Herrick S.R."/>
            <person name="Lemyre E."/>
            <person name="Farra C.G."/>
            <person name="Kim H.-G."/>
            <person name="Summers A.M."/>
            <person name="Gripp K.W."/>
            <person name="Roberts W."/>
            <person name="Szatmari P."/>
            <person name="Winsor E.J.T."/>
            <person name="Grzeschik K.-H."/>
            <person name="Teebi A."/>
            <person name="Minassian B.A."/>
            <person name="Kere J."/>
            <person name="Armengol L."/>
            <person name="Pujana M.A."/>
            <person name="Estivill X."/>
            <person name="Wilson M.D."/>
            <person name="Koop B.F."/>
            <person name="Tosi S."/>
            <person name="Moore G.E."/>
            <person name="Boright A.P."/>
            <person name="Zlotorynski E."/>
            <person name="Kerem B."/>
            <person name="Kroisel P.M."/>
            <person name="Petek E."/>
            <person name="Oscier D.G."/>
            <person name="Mould S.J."/>
            <person name="Doehner H."/>
            <person name="Doehner K."/>
            <person name="Rommens J.M."/>
            <person name="Vincent J.B."/>
            <person name="Venter J.C."/>
            <person name="Li P.W."/>
            <person name="Mural R.J."/>
            <person name="Adams M.D."/>
            <person name="Tsui L.-C."/>
        </authorList>
    </citation>
    <scope>NUCLEOTIDE SEQUENCE [LARGE SCALE GENOMIC DNA]</scope>
    <scope>VARIANT ILE-133</scope>
</reference>
<reference key="6">
    <citation type="journal article" date="2004" name="Genome Res.">
        <title>The status, quality, and expansion of the NIH full-length cDNA project: the Mammalian Gene Collection (MGC).</title>
        <authorList>
            <consortium name="The MGC Project Team"/>
        </authorList>
    </citation>
    <scope>NUCLEOTIDE SEQUENCE [LARGE SCALE MRNA]</scope>
    <scope>VARIANT ILE-133</scope>
    <source>
        <tissue>Testis</tissue>
    </source>
</reference>
<reference key="7">
    <citation type="journal article" date="2003" name="Nature">
        <title>The DNA sequence of human chromosome 7.</title>
        <authorList>
            <person name="Hillier L.W."/>
            <person name="Fulton R.S."/>
            <person name="Fulton L.A."/>
            <person name="Graves T.A."/>
            <person name="Pepin K.H."/>
            <person name="Wagner-McPherson C."/>
            <person name="Layman D."/>
            <person name="Maas J."/>
            <person name="Jaeger S."/>
            <person name="Walker R."/>
            <person name="Wylie K."/>
            <person name="Sekhon M."/>
            <person name="Becker M.C."/>
            <person name="O'Laughlin M.D."/>
            <person name="Schaller M.E."/>
            <person name="Fewell G.A."/>
            <person name="Delehaunty K.D."/>
            <person name="Miner T.L."/>
            <person name="Nash W.E."/>
            <person name="Cordes M."/>
            <person name="Du H."/>
            <person name="Sun H."/>
            <person name="Edwards J."/>
            <person name="Bradshaw-Cordum H."/>
            <person name="Ali J."/>
            <person name="Andrews S."/>
            <person name="Isak A."/>
            <person name="Vanbrunt A."/>
            <person name="Nguyen C."/>
            <person name="Du F."/>
            <person name="Lamar B."/>
            <person name="Courtney L."/>
            <person name="Kalicki J."/>
            <person name="Ozersky P."/>
            <person name="Bielicki L."/>
            <person name="Scott K."/>
            <person name="Holmes A."/>
            <person name="Harkins R."/>
            <person name="Harris A."/>
            <person name="Strong C.M."/>
            <person name="Hou S."/>
            <person name="Tomlinson C."/>
            <person name="Dauphin-Kohlberg S."/>
            <person name="Kozlowicz-Reilly A."/>
            <person name="Leonard S."/>
            <person name="Rohlfing T."/>
            <person name="Rock S.M."/>
            <person name="Tin-Wollam A.-M."/>
            <person name="Abbott A."/>
            <person name="Minx P."/>
            <person name="Maupin R."/>
            <person name="Strowmatt C."/>
            <person name="Latreille P."/>
            <person name="Miller N."/>
            <person name="Johnson D."/>
            <person name="Murray J."/>
            <person name="Woessner J.P."/>
            <person name="Wendl M.C."/>
            <person name="Yang S.-P."/>
            <person name="Schultz B.R."/>
            <person name="Wallis J.W."/>
            <person name="Spieth J."/>
            <person name="Bieri T.A."/>
            <person name="Nelson J.O."/>
            <person name="Berkowicz N."/>
            <person name="Wohldmann P.E."/>
            <person name="Cook L.L."/>
            <person name="Hickenbotham M.T."/>
            <person name="Eldred J."/>
            <person name="Williams D."/>
            <person name="Bedell J.A."/>
            <person name="Mardis E.R."/>
            <person name="Clifton S.W."/>
            <person name="Chissoe S.L."/>
            <person name="Marra M.A."/>
            <person name="Raymond C."/>
            <person name="Haugen E."/>
            <person name="Gillett W."/>
            <person name="Zhou Y."/>
            <person name="James R."/>
            <person name="Phelps K."/>
            <person name="Iadanoto S."/>
            <person name="Bubb K."/>
            <person name="Simms E."/>
            <person name="Levy R."/>
            <person name="Clendenning J."/>
            <person name="Kaul R."/>
            <person name="Kent W.J."/>
            <person name="Furey T.S."/>
            <person name="Baertsch R.A."/>
            <person name="Brent M.R."/>
            <person name="Keibler E."/>
            <person name="Flicek P."/>
            <person name="Bork P."/>
            <person name="Suyama M."/>
            <person name="Bailey J.A."/>
            <person name="Portnoy M.E."/>
            <person name="Torrents D."/>
            <person name="Chinwalla A.T."/>
            <person name="Gish W.R."/>
            <person name="Eddy S.R."/>
            <person name="McPherson J.D."/>
            <person name="Olson M.V."/>
            <person name="Eichler E.E."/>
            <person name="Green E.D."/>
            <person name="Waterston R.H."/>
            <person name="Wilson R.K."/>
        </authorList>
    </citation>
    <scope>NUCLEOTIDE SEQUENCE [LARGE SCALE GENOMIC DNA]</scope>
</reference>
<reference key="8">
    <citation type="journal article" date="2004" name="Proc. Natl. Acad. Sci. U.S.A.">
        <title>The human olfactory receptor gene family.</title>
        <authorList>
            <person name="Malnic B."/>
            <person name="Godfrey P.A."/>
            <person name="Buck L.B."/>
        </authorList>
    </citation>
    <scope>IDENTIFICATION</scope>
    <scope>VARIANTS ILE-133 AND ARG-164</scope>
</reference>
<reference key="9">
    <citation type="journal article" date="2004" name="Proc. Natl. Acad. Sci. U.S.A.">
        <authorList>
            <person name="Malnic B."/>
            <person name="Godfrey P.A."/>
            <person name="Buck L.B."/>
        </authorList>
    </citation>
    <scope>ERRATUM OF PUBMED:14983052</scope>
</reference>
<sequence>MEGNKTWITDITLPRFQVGPALEILLCGLFSAFYTLTLLGNGVIFGIICLDCKLHTPMYFFLSHLAIVDISYASNYVPKMLTNLMNQESTISFFPCIMQTFLYLAFAHVECLILVVMSYDRYADICHPLRYNSLMSWRVCTVLAVASWVFSFLLALVPLVLILSLPFCGPHEINHFFCEILSVLKLACADTWLNQVVIFAACVFILVGPLCLVLVSYLRILAAILRIQSGEGRRKAFSTCSSHLCVVGLFFGSAIVTYMAPKSRHPEEQQKVLSLFYSLFNPMLNPLIYSLRNAEVKGALRRALRKERLT</sequence>
<protein>
    <recommendedName>
        <fullName>Olfactory receptor 2A14</fullName>
    </recommendedName>
    <alternativeName>
        <fullName>OST182</fullName>
    </alternativeName>
    <alternativeName>
        <fullName>Olfactory receptor 2A6</fullName>
    </alternativeName>
    <alternativeName>
        <fullName>Olfactory receptor OR7-12</fullName>
    </alternativeName>
</protein>
<name>O2A14_HUMAN</name>
<accession>Q96R47</accession>
<accession>A4D2G5</accession>
<accession>Q6IF41</accession>
<accession>Q8NGT8</accession>